<keyword id="KW-0648">Protein biosynthesis</keyword>
<keyword id="KW-1185">Reference proteome</keyword>
<keyword id="KW-0808">Transferase</keyword>
<proteinExistence type="inferred from homology"/>
<protein>
    <recommendedName>
        <fullName evidence="1">Methionyl-tRNA formyltransferase</fullName>
        <ecNumber evidence="1">2.1.2.9</ecNumber>
    </recommendedName>
</protein>
<evidence type="ECO:0000255" key="1">
    <source>
        <dbReference type="HAMAP-Rule" id="MF_00182"/>
    </source>
</evidence>
<reference key="1">
    <citation type="submission" date="2007-10" db="EMBL/GenBank/DDBJ databases">
        <title>Brucella canis ATCC 23365 whole genome shotgun sequencing project.</title>
        <authorList>
            <person name="Setubal J.C."/>
            <person name="Bowns C."/>
            <person name="Boyle S."/>
            <person name="Crasta O.R."/>
            <person name="Czar M.J."/>
            <person name="Dharmanolla C."/>
            <person name="Gillespie J.J."/>
            <person name="Kenyon R.W."/>
            <person name="Lu J."/>
            <person name="Mane S."/>
            <person name="Mohapatra S."/>
            <person name="Nagrani S."/>
            <person name="Purkayastha A."/>
            <person name="Rajasimha H.K."/>
            <person name="Shallom J.M."/>
            <person name="Shallom S."/>
            <person name="Shukla M."/>
            <person name="Snyder E.E."/>
            <person name="Sobral B.W."/>
            <person name="Wattam A.R."/>
            <person name="Will R."/>
            <person name="Williams K."/>
            <person name="Yoo H."/>
            <person name="Bruce D."/>
            <person name="Detter C."/>
            <person name="Munk C."/>
            <person name="Brettin T.S."/>
        </authorList>
    </citation>
    <scope>NUCLEOTIDE SEQUENCE [LARGE SCALE GENOMIC DNA]</scope>
    <source>
        <strain>ATCC 23365 / NCTC 10854 / RM-666</strain>
    </source>
</reference>
<feature type="chain" id="PRO_1000077289" description="Methionyl-tRNA formyltransferase">
    <location>
        <begin position="1"/>
        <end position="306"/>
    </location>
</feature>
<feature type="binding site" evidence="1">
    <location>
        <begin position="110"/>
        <end position="113"/>
    </location>
    <ligand>
        <name>(6S)-5,6,7,8-tetrahydrofolate</name>
        <dbReference type="ChEBI" id="CHEBI:57453"/>
    </ligand>
</feature>
<name>FMT_BRUC2</name>
<gene>
    <name evidence="1" type="primary">fmt</name>
    <name type="ordered locus">BCAN_B1054</name>
</gene>
<accession>A9MCV9</accession>
<dbReference type="EC" id="2.1.2.9" evidence="1"/>
<dbReference type="EMBL" id="CP000873">
    <property type="protein sequence ID" value="ABX64196.1"/>
    <property type="molecule type" value="Genomic_DNA"/>
</dbReference>
<dbReference type="RefSeq" id="WP_004682455.1">
    <property type="nucleotide sequence ID" value="NC_010104.1"/>
</dbReference>
<dbReference type="SMR" id="A9MCV9"/>
<dbReference type="GeneID" id="55592657"/>
<dbReference type="KEGG" id="bcs:BCAN_B1054"/>
<dbReference type="HOGENOM" id="CLU_033347_1_2_5"/>
<dbReference type="PhylomeDB" id="A9MCV9"/>
<dbReference type="Proteomes" id="UP000001385">
    <property type="component" value="Chromosome II"/>
</dbReference>
<dbReference type="GO" id="GO:0005829">
    <property type="term" value="C:cytosol"/>
    <property type="evidence" value="ECO:0007669"/>
    <property type="project" value="TreeGrafter"/>
</dbReference>
<dbReference type="GO" id="GO:0004479">
    <property type="term" value="F:methionyl-tRNA formyltransferase activity"/>
    <property type="evidence" value="ECO:0007669"/>
    <property type="project" value="UniProtKB-UniRule"/>
</dbReference>
<dbReference type="CDD" id="cd08646">
    <property type="entry name" value="FMT_core_Met-tRNA-FMT_N"/>
    <property type="match status" value="1"/>
</dbReference>
<dbReference type="CDD" id="cd08704">
    <property type="entry name" value="Met_tRNA_FMT_C"/>
    <property type="match status" value="1"/>
</dbReference>
<dbReference type="FunFam" id="3.40.50.12230:FF:000001">
    <property type="entry name" value="Methionyl-tRNA formyltransferase"/>
    <property type="match status" value="1"/>
</dbReference>
<dbReference type="Gene3D" id="3.10.25.10">
    <property type="entry name" value="Formyl transferase, C-terminal domain"/>
    <property type="match status" value="1"/>
</dbReference>
<dbReference type="Gene3D" id="3.40.50.170">
    <property type="entry name" value="Formyl transferase, N-terminal domain"/>
    <property type="match status" value="1"/>
</dbReference>
<dbReference type="HAMAP" id="MF_00182">
    <property type="entry name" value="Formyl_trans"/>
    <property type="match status" value="1"/>
</dbReference>
<dbReference type="InterPro" id="IPR005794">
    <property type="entry name" value="Fmt"/>
</dbReference>
<dbReference type="InterPro" id="IPR005793">
    <property type="entry name" value="Formyl_trans_C"/>
</dbReference>
<dbReference type="InterPro" id="IPR037022">
    <property type="entry name" value="Formyl_trans_C_sf"/>
</dbReference>
<dbReference type="InterPro" id="IPR002376">
    <property type="entry name" value="Formyl_transf_N"/>
</dbReference>
<dbReference type="InterPro" id="IPR036477">
    <property type="entry name" value="Formyl_transf_N_sf"/>
</dbReference>
<dbReference type="InterPro" id="IPR011034">
    <property type="entry name" value="Formyl_transferase-like_C_sf"/>
</dbReference>
<dbReference type="InterPro" id="IPR001555">
    <property type="entry name" value="GART_AS"/>
</dbReference>
<dbReference type="InterPro" id="IPR044135">
    <property type="entry name" value="Met-tRNA-FMT_C"/>
</dbReference>
<dbReference type="InterPro" id="IPR041711">
    <property type="entry name" value="Met-tRNA-FMT_N"/>
</dbReference>
<dbReference type="NCBIfam" id="TIGR00460">
    <property type="entry name" value="fmt"/>
    <property type="match status" value="1"/>
</dbReference>
<dbReference type="PANTHER" id="PTHR11138">
    <property type="entry name" value="METHIONYL-TRNA FORMYLTRANSFERASE"/>
    <property type="match status" value="1"/>
</dbReference>
<dbReference type="PANTHER" id="PTHR11138:SF5">
    <property type="entry name" value="METHIONYL-TRNA FORMYLTRANSFERASE, MITOCHONDRIAL"/>
    <property type="match status" value="1"/>
</dbReference>
<dbReference type="Pfam" id="PF02911">
    <property type="entry name" value="Formyl_trans_C"/>
    <property type="match status" value="1"/>
</dbReference>
<dbReference type="Pfam" id="PF00551">
    <property type="entry name" value="Formyl_trans_N"/>
    <property type="match status" value="1"/>
</dbReference>
<dbReference type="SUPFAM" id="SSF50486">
    <property type="entry name" value="FMT C-terminal domain-like"/>
    <property type="match status" value="1"/>
</dbReference>
<dbReference type="SUPFAM" id="SSF53328">
    <property type="entry name" value="Formyltransferase"/>
    <property type="match status" value="1"/>
</dbReference>
<dbReference type="PROSITE" id="PS00373">
    <property type="entry name" value="GART"/>
    <property type="match status" value="1"/>
</dbReference>
<organism>
    <name type="scientific">Brucella canis (strain ATCC 23365 / NCTC 10854 / RM-666)</name>
    <dbReference type="NCBI Taxonomy" id="483179"/>
    <lineage>
        <taxon>Bacteria</taxon>
        <taxon>Pseudomonadati</taxon>
        <taxon>Pseudomonadota</taxon>
        <taxon>Alphaproteobacteria</taxon>
        <taxon>Hyphomicrobiales</taxon>
        <taxon>Brucellaceae</taxon>
        <taxon>Brucella/Ochrobactrum group</taxon>
        <taxon>Brucella</taxon>
    </lineage>
</organism>
<sequence length="306" mass="32772">MRVVFMGTPEFSVPILTAIIGHGYEVVAAYTQPPRPAGRRGLELTRSPVHEKAEQFGIPVFTPKSLKGAEEQDVFASLEADVAIVVAYGLLLPKAILDAPRLGCYNGHASLLPRWRGAAPIQRAIMAGDAETGMMIMKMDEGLDTGPVAMAEKVAITPDMTAGELHDRLSMIGADLMIRALGALERESLALQPQAEEGVTYAAKIDKAEARIDWSKPAKDVHNSIRGLSPFPGAWCEMEINGAVERVKLQRSTLGEGSGAPGTVLDDRLTIACGEGAVRLATLQRSGGKPLPAQEFLRGQRVTKVL</sequence>
<comment type="function">
    <text evidence="1">Attaches a formyl group to the free amino group of methionyl-tRNA(fMet). The formyl group appears to play a dual role in the initiator identity of N-formylmethionyl-tRNA by promoting its recognition by IF2 and preventing the misappropriation of this tRNA by the elongation apparatus.</text>
</comment>
<comment type="catalytic activity">
    <reaction evidence="1">
        <text>L-methionyl-tRNA(fMet) + (6R)-10-formyltetrahydrofolate = N-formyl-L-methionyl-tRNA(fMet) + (6S)-5,6,7,8-tetrahydrofolate + H(+)</text>
        <dbReference type="Rhea" id="RHEA:24380"/>
        <dbReference type="Rhea" id="RHEA-COMP:9952"/>
        <dbReference type="Rhea" id="RHEA-COMP:9953"/>
        <dbReference type="ChEBI" id="CHEBI:15378"/>
        <dbReference type="ChEBI" id="CHEBI:57453"/>
        <dbReference type="ChEBI" id="CHEBI:78530"/>
        <dbReference type="ChEBI" id="CHEBI:78844"/>
        <dbReference type="ChEBI" id="CHEBI:195366"/>
        <dbReference type="EC" id="2.1.2.9"/>
    </reaction>
</comment>
<comment type="similarity">
    <text evidence="1">Belongs to the Fmt family.</text>
</comment>